<reference key="1">
    <citation type="journal article" date="2000" name="Nature">
        <title>Sequence and analysis of chromosome 1 of the plant Arabidopsis thaliana.</title>
        <authorList>
            <person name="Theologis A."/>
            <person name="Ecker J.R."/>
            <person name="Palm C.J."/>
            <person name="Federspiel N.A."/>
            <person name="Kaul S."/>
            <person name="White O."/>
            <person name="Alonso J."/>
            <person name="Altafi H."/>
            <person name="Araujo R."/>
            <person name="Bowman C.L."/>
            <person name="Brooks S.Y."/>
            <person name="Buehler E."/>
            <person name="Chan A."/>
            <person name="Chao Q."/>
            <person name="Chen H."/>
            <person name="Cheuk R.F."/>
            <person name="Chin C.W."/>
            <person name="Chung M.K."/>
            <person name="Conn L."/>
            <person name="Conway A.B."/>
            <person name="Conway A.R."/>
            <person name="Creasy T.H."/>
            <person name="Dewar K."/>
            <person name="Dunn P."/>
            <person name="Etgu P."/>
            <person name="Feldblyum T.V."/>
            <person name="Feng J.-D."/>
            <person name="Fong B."/>
            <person name="Fujii C.Y."/>
            <person name="Gill J.E."/>
            <person name="Goldsmith A.D."/>
            <person name="Haas B."/>
            <person name="Hansen N.F."/>
            <person name="Hughes B."/>
            <person name="Huizar L."/>
            <person name="Hunter J.L."/>
            <person name="Jenkins J."/>
            <person name="Johnson-Hopson C."/>
            <person name="Khan S."/>
            <person name="Khaykin E."/>
            <person name="Kim C.J."/>
            <person name="Koo H.L."/>
            <person name="Kremenetskaia I."/>
            <person name="Kurtz D.B."/>
            <person name="Kwan A."/>
            <person name="Lam B."/>
            <person name="Langin-Hooper S."/>
            <person name="Lee A."/>
            <person name="Lee J.M."/>
            <person name="Lenz C.A."/>
            <person name="Li J.H."/>
            <person name="Li Y.-P."/>
            <person name="Lin X."/>
            <person name="Liu S.X."/>
            <person name="Liu Z.A."/>
            <person name="Luros J.S."/>
            <person name="Maiti R."/>
            <person name="Marziali A."/>
            <person name="Militscher J."/>
            <person name="Miranda M."/>
            <person name="Nguyen M."/>
            <person name="Nierman W.C."/>
            <person name="Osborne B.I."/>
            <person name="Pai G."/>
            <person name="Peterson J."/>
            <person name="Pham P.K."/>
            <person name="Rizzo M."/>
            <person name="Rooney T."/>
            <person name="Rowley D."/>
            <person name="Sakano H."/>
            <person name="Salzberg S.L."/>
            <person name="Schwartz J.R."/>
            <person name="Shinn P."/>
            <person name="Southwick A.M."/>
            <person name="Sun H."/>
            <person name="Tallon L.J."/>
            <person name="Tambunga G."/>
            <person name="Toriumi M.J."/>
            <person name="Town C.D."/>
            <person name="Utterback T."/>
            <person name="Van Aken S."/>
            <person name="Vaysberg M."/>
            <person name="Vysotskaia V.S."/>
            <person name="Walker M."/>
            <person name="Wu D."/>
            <person name="Yu G."/>
            <person name="Fraser C.M."/>
            <person name="Venter J.C."/>
            <person name="Davis R.W."/>
        </authorList>
    </citation>
    <scope>NUCLEOTIDE SEQUENCE [LARGE SCALE GENOMIC DNA]</scope>
    <source>
        <strain>cv. Columbia</strain>
    </source>
</reference>
<reference key="2">
    <citation type="journal article" date="2017" name="Plant J.">
        <title>Araport11: a complete reannotation of the Arabidopsis thaliana reference genome.</title>
        <authorList>
            <person name="Cheng C.Y."/>
            <person name="Krishnakumar V."/>
            <person name="Chan A.P."/>
            <person name="Thibaud-Nissen F."/>
            <person name="Schobel S."/>
            <person name="Town C.D."/>
        </authorList>
    </citation>
    <scope>GENOME REANNOTATION</scope>
    <source>
        <strain>cv. Columbia</strain>
    </source>
</reference>
<reference key="3">
    <citation type="journal article" date="2003" name="Science">
        <title>Empirical analysis of transcriptional activity in the Arabidopsis genome.</title>
        <authorList>
            <person name="Yamada K."/>
            <person name="Lim J."/>
            <person name="Dale J.M."/>
            <person name="Chen H."/>
            <person name="Shinn P."/>
            <person name="Palm C.J."/>
            <person name="Southwick A.M."/>
            <person name="Wu H.C."/>
            <person name="Kim C.J."/>
            <person name="Nguyen M."/>
            <person name="Pham P.K."/>
            <person name="Cheuk R.F."/>
            <person name="Karlin-Newmann G."/>
            <person name="Liu S.X."/>
            <person name="Lam B."/>
            <person name="Sakano H."/>
            <person name="Wu T."/>
            <person name="Yu G."/>
            <person name="Miranda M."/>
            <person name="Quach H.L."/>
            <person name="Tripp M."/>
            <person name="Chang C.H."/>
            <person name="Lee J.M."/>
            <person name="Toriumi M.J."/>
            <person name="Chan M.M."/>
            <person name="Tang C.C."/>
            <person name="Onodera C.S."/>
            <person name="Deng J.M."/>
            <person name="Akiyama K."/>
            <person name="Ansari Y."/>
            <person name="Arakawa T."/>
            <person name="Banh J."/>
            <person name="Banno F."/>
            <person name="Bowser L."/>
            <person name="Brooks S.Y."/>
            <person name="Carninci P."/>
            <person name="Chao Q."/>
            <person name="Choy N."/>
            <person name="Enju A."/>
            <person name="Goldsmith A.D."/>
            <person name="Gurjal M."/>
            <person name="Hansen N.F."/>
            <person name="Hayashizaki Y."/>
            <person name="Johnson-Hopson C."/>
            <person name="Hsuan V.W."/>
            <person name="Iida K."/>
            <person name="Karnes M."/>
            <person name="Khan S."/>
            <person name="Koesema E."/>
            <person name="Ishida J."/>
            <person name="Jiang P.X."/>
            <person name="Jones T."/>
            <person name="Kawai J."/>
            <person name="Kamiya A."/>
            <person name="Meyers C."/>
            <person name="Nakajima M."/>
            <person name="Narusaka M."/>
            <person name="Seki M."/>
            <person name="Sakurai T."/>
            <person name="Satou M."/>
            <person name="Tamse R."/>
            <person name="Vaysberg M."/>
            <person name="Wallender E.K."/>
            <person name="Wong C."/>
            <person name="Yamamura Y."/>
            <person name="Yuan S."/>
            <person name="Shinozaki K."/>
            <person name="Davis R.W."/>
            <person name="Theologis A."/>
            <person name="Ecker J.R."/>
        </authorList>
    </citation>
    <scope>NUCLEOTIDE SEQUENCE [LARGE SCALE MRNA]</scope>
    <source>
        <strain>cv. Columbia</strain>
    </source>
</reference>
<reference key="4">
    <citation type="submission" date="2002-03" db="EMBL/GenBank/DDBJ databases">
        <title>Full-length cDNA from Arabidopsis thaliana.</title>
        <authorList>
            <person name="Brover V.V."/>
            <person name="Troukhan M.E."/>
            <person name="Alexandrov N.A."/>
            <person name="Lu Y.-P."/>
            <person name="Flavell R.B."/>
            <person name="Feldmann K.A."/>
        </authorList>
    </citation>
    <scope>NUCLEOTIDE SEQUENCE [LARGE SCALE MRNA]</scope>
</reference>
<reference key="5">
    <citation type="journal article" date="2004" name="Trends Plant Sci.">
        <title>Plant PP2C phosphatases: emerging functions in stress signaling.</title>
        <authorList>
            <person name="Schweighofer A."/>
            <person name="Hirt H."/>
            <person name="Meskiene I."/>
        </authorList>
    </citation>
    <scope>GENE FAMILY</scope>
    <scope>NOMENCLATURE</scope>
</reference>
<reference key="6">
    <citation type="journal article" date="2007" name="Proc. Natl. Acad. Sci. U.S.A.">
        <title>A protein phosphorylation/dephosphorylation network regulates a plant potassium channel.</title>
        <authorList>
            <person name="Lee S.-C."/>
            <person name="Lan W.-Z."/>
            <person name="Kim B.-G."/>
            <person name="Li L."/>
            <person name="Cheong Y.H."/>
            <person name="Pandey G.K."/>
            <person name="Lu G."/>
            <person name="Buchanan B.B."/>
            <person name="Luan S."/>
        </authorList>
    </citation>
    <scope>FUNCTION</scope>
    <scope>INTERACTION WITH AKT1 AND CIPK23</scope>
    <scope>SUBCELLULAR LOCATION</scope>
</reference>
<reference key="7">
    <citation type="journal article" date="2008" name="BMC Genomics">
        <title>Genome-wide and expression analysis of protein phosphatase 2C in rice and Arabidopsis.</title>
        <authorList>
            <person name="Xue T."/>
            <person name="Wang D."/>
            <person name="Zhang S."/>
            <person name="Ehlting J."/>
            <person name="Ni F."/>
            <person name="Jacab S."/>
            <person name="Zheng C."/>
            <person name="Zhong Y."/>
        </authorList>
    </citation>
    <scope>GENE FAMILY</scope>
    <scope>NOMENCLATURE</scope>
</reference>
<reference key="8">
    <citation type="journal article" date="2009" name="Plant Cell Physiol.">
        <title>Three SnRK2 protein kinases are the main positive regulators of abscisic acid signaling in response to water stress in Arabidopsis.</title>
        <authorList>
            <person name="Fujita Y."/>
            <person name="Nakashima K."/>
            <person name="Yoshida T."/>
            <person name="Katagiri T."/>
            <person name="Kidokoro S."/>
            <person name="Kanamori N."/>
            <person name="Umezawa T."/>
            <person name="Fujita M."/>
            <person name="Maruyama K."/>
            <person name="Ishiyama K."/>
            <person name="Kobayashi M."/>
            <person name="Nakasone S."/>
            <person name="Yamada K."/>
            <person name="Ito T."/>
            <person name="Shinozaki K."/>
            <person name="Yamaguchi-Shinozaki K."/>
        </authorList>
    </citation>
    <scope>INDUCTION BY ABSCISIC ACID</scope>
</reference>
<reference key="9">
    <citation type="journal article" date="2012" name="Plant Sci.">
        <title>Functional roles of the protein phosphatase 2C, AtAIP1, in abscisic acid signaling and sugar tolerance in Arabidopsis.</title>
        <authorList>
            <person name="Lim C.W."/>
            <person name="Kim J.H."/>
            <person name="Baek W."/>
            <person name="Kim B.S."/>
            <person name="Lee S.C."/>
        </authorList>
    </citation>
    <scope>FUNCTION</scope>
    <scope>INTERACTION WITH PYL8/RCAR3</scope>
    <scope>SUBCELLULAR LOCATION</scope>
    <scope>TISSUE SPECIFICITY</scope>
    <scope>DISRUPTION PHENOTYPE</scope>
</reference>
<reference key="10">
    <citation type="journal article" date="2013" name="Plant Cell Physiol.">
        <title>HONSU, a protein phosphatase 2C, regulates seed dormancy by inhibiting ABA signaling in Arabidopsis.</title>
        <authorList>
            <person name="Kim W."/>
            <person name="Lee Y."/>
            <person name="Park J."/>
            <person name="Lee N."/>
            <person name="Choi G."/>
        </authorList>
    </citation>
    <scope>FUNCTION</scope>
    <scope>INTERACTION WITH PYR1/RCAR11</scope>
    <scope>TISSUE SPECIFICITY</scope>
    <scope>DISRUPTION PHENOTYPE</scope>
</reference>
<organism>
    <name type="scientific">Arabidopsis thaliana</name>
    <name type="common">Mouse-ear cress</name>
    <dbReference type="NCBI Taxonomy" id="3702"/>
    <lineage>
        <taxon>Eukaryota</taxon>
        <taxon>Viridiplantae</taxon>
        <taxon>Streptophyta</taxon>
        <taxon>Embryophyta</taxon>
        <taxon>Tracheophyta</taxon>
        <taxon>Spermatophyta</taxon>
        <taxon>Magnoliopsida</taxon>
        <taxon>eudicotyledons</taxon>
        <taxon>Gunneridae</taxon>
        <taxon>Pentapetalae</taxon>
        <taxon>rosids</taxon>
        <taxon>malvids</taxon>
        <taxon>Brassicales</taxon>
        <taxon>Brassicaceae</taxon>
        <taxon>Camelineae</taxon>
        <taxon>Arabidopsis</taxon>
    </lineage>
</organism>
<dbReference type="EC" id="3.1.3.16" evidence="12"/>
<dbReference type="EMBL" id="AC022464">
    <property type="protein sequence ID" value="AAF79555.1"/>
    <property type="molecule type" value="Genomic_DNA"/>
</dbReference>
<dbReference type="EMBL" id="CP002684">
    <property type="protein sequence ID" value="AEE28124.1"/>
    <property type="molecule type" value="Genomic_DNA"/>
</dbReference>
<dbReference type="EMBL" id="AY070089">
    <property type="protein sequence ID" value="AAL49783.1"/>
    <property type="molecule type" value="mRNA"/>
</dbReference>
<dbReference type="EMBL" id="AY091341">
    <property type="protein sequence ID" value="AAM14280.1"/>
    <property type="molecule type" value="mRNA"/>
</dbReference>
<dbReference type="EMBL" id="AY084794">
    <property type="protein sequence ID" value="AAM61361.1"/>
    <property type="molecule type" value="mRNA"/>
</dbReference>
<dbReference type="PIR" id="B86209">
    <property type="entry name" value="B86209"/>
</dbReference>
<dbReference type="RefSeq" id="NP_172223.1">
    <property type="nucleotide sequence ID" value="NM_100617.3"/>
</dbReference>
<dbReference type="SMR" id="Q9LNW3"/>
<dbReference type="BioGRID" id="22496">
    <property type="interactions" value="28"/>
</dbReference>
<dbReference type="DIP" id="DIP-40200N"/>
<dbReference type="FunCoup" id="Q9LNW3">
    <property type="interactions" value="367"/>
</dbReference>
<dbReference type="IntAct" id="Q9LNW3">
    <property type="interactions" value="28"/>
</dbReference>
<dbReference type="STRING" id="3702.Q9LNW3"/>
<dbReference type="iPTMnet" id="Q9LNW3"/>
<dbReference type="PaxDb" id="3702-AT1G07430.1"/>
<dbReference type="ProteomicsDB" id="248698"/>
<dbReference type="EnsemblPlants" id="AT1G07430.1">
    <property type="protein sequence ID" value="AT1G07430.1"/>
    <property type="gene ID" value="AT1G07430"/>
</dbReference>
<dbReference type="GeneID" id="837255"/>
<dbReference type="Gramene" id="AT1G07430.1">
    <property type="protein sequence ID" value="AT1G07430.1"/>
    <property type="gene ID" value="AT1G07430"/>
</dbReference>
<dbReference type="KEGG" id="ath:AT1G07430"/>
<dbReference type="Araport" id="AT1G07430"/>
<dbReference type="TAIR" id="AT1G07430">
    <property type="gene designation" value="HAI2"/>
</dbReference>
<dbReference type="eggNOG" id="KOG0698">
    <property type="taxonomic scope" value="Eukaryota"/>
</dbReference>
<dbReference type="HOGENOM" id="CLU_013173_20_0_1"/>
<dbReference type="InParanoid" id="Q9LNW3"/>
<dbReference type="OMA" id="VCCDSAA"/>
<dbReference type="PhylomeDB" id="Q9LNW3"/>
<dbReference type="PRO" id="PR:Q9LNW3"/>
<dbReference type="Proteomes" id="UP000006548">
    <property type="component" value="Chromosome 1"/>
</dbReference>
<dbReference type="ExpressionAtlas" id="Q9LNW3">
    <property type="expression patterns" value="baseline and differential"/>
</dbReference>
<dbReference type="GO" id="GO:0005737">
    <property type="term" value="C:cytoplasm"/>
    <property type="evidence" value="ECO:0007669"/>
    <property type="project" value="UniProtKB-SubCell"/>
</dbReference>
<dbReference type="GO" id="GO:0005634">
    <property type="term" value="C:nucleus"/>
    <property type="evidence" value="ECO:0007669"/>
    <property type="project" value="UniProtKB-SubCell"/>
</dbReference>
<dbReference type="GO" id="GO:0005886">
    <property type="term" value="C:plasma membrane"/>
    <property type="evidence" value="ECO:0007669"/>
    <property type="project" value="UniProtKB-SubCell"/>
</dbReference>
<dbReference type="GO" id="GO:0046872">
    <property type="term" value="F:metal ion binding"/>
    <property type="evidence" value="ECO:0007669"/>
    <property type="project" value="UniProtKB-KW"/>
</dbReference>
<dbReference type="GO" id="GO:0004722">
    <property type="term" value="F:protein serine/threonine phosphatase activity"/>
    <property type="evidence" value="ECO:0007669"/>
    <property type="project" value="UniProtKB-EC"/>
</dbReference>
<dbReference type="GO" id="GO:0009788">
    <property type="term" value="P:negative regulation of abscisic acid-activated signaling pathway"/>
    <property type="evidence" value="ECO:0000315"/>
    <property type="project" value="TAIR"/>
</dbReference>
<dbReference type="GO" id="GO:1902039">
    <property type="term" value="P:negative regulation of seed dormancy process"/>
    <property type="evidence" value="ECO:0000315"/>
    <property type="project" value="TAIR"/>
</dbReference>
<dbReference type="GO" id="GO:0009939">
    <property type="term" value="P:positive regulation of gibberellic acid mediated signaling pathway"/>
    <property type="evidence" value="ECO:0000315"/>
    <property type="project" value="TAIR"/>
</dbReference>
<dbReference type="GO" id="GO:0010030">
    <property type="term" value="P:positive regulation of seed germination"/>
    <property type="evidence" value="ECO:0000315"/>
    <property type="project" value="TAIR"/>
</dbReference>
<dbReference type="GO" id="GO:0048838">
    <property type="term" value="P:release of seed from dormancy"/>
    <property type="evidence" value="ECO:0000315"/>
    <property type="project" value="TAIR"/>
</dbReference>
<dbReference type="CDD" id="cd00143">
    <property type="entry name" value="PP2Cc"/>
    <property type="match status" value="1"/>
</dbReference>
<dbReference type="FunFam" id="3.60.40.10:FF:000065">
    <property type="entry name" value="Protein phosphatase 2C 37"/>
    <property type="match status" value="1"/>
</dbReference>
<dbReference type="Gene3D" id="3.60.40.10">
    <property type="entry name" value="PPM-type phosphatase domain"/>
    <property type="match status" value="1"/>
</dbReference>
<dbReference type="InterPro" id="IPR015655">
    <property type="entry name" value="PP2C"/>
</dbReference>
<dbReference type="InterPro" id="IPR000222">
    <property type="entry name" value="PP2C_BS"/>
</dbReference>
<dbReference type="InterPro" id="IPR036457">
    <property type="entry name" value="PPM-type-like_dom_sf"/>
</dbReference>
<dbReference type="InterPro" id="IPR001932">
    <property type="entry name" value="PPM-type_phosphatase-like_dom"/>
</dbReference>
<dbReference type="PANTHER" id="PTHR47992">
    <property type="entry name" value="PROTEIN PHOSPHATASE"/>
    <property type="match status" value="1"/>
</dbReference>
<dbReference type="Pfam" id="PF00481">
    <property type="entry name" value="PP2C"/>
    <property type="match status" value="1"/>
</dbReference>
<dbReference type="SMART" id="SM00332">
    <property type="entry name" value="PP2Cc"/>
    <property type="match status" value="1"/>
</dbReference>
<dbReference type="SUPFAM" id="SSF81606">
    <property type="entry name" value="PP2C-like"/>
    <property type="match status" value="1"/>
</dbReference>
<dbReference type="PROSITE" id="PS01032">
    <property type="entry name" value="PPM_1"/>
    <property type="match status" value="1"/>
</dbReference>
<dbReference type="PROSITE" id="PS51746">
    <property type="entry name" value="PPM_2"/>
    <property type="match status" value="1"/>
</dbReference>
<proteinExistence type="evidence at protein level"/>
<sequence>MADICYEDETSACESRPLWSSRKWRIGVQRFRMSPSEMNPTASTTEEEDKSEGIYNKRNKQEEYDFMNCASSSPSQSSPEEESVSLEDSDVSISDGNSSVNDVAVIPSKKTVKETDLRPRYGVASVCGRRRDMEDAVALHPSFVRKQTEFSRTRWHYFGVYDGHGCSHVAARCKERLHELVQEEALSDKKEEWKKMMERSFTRMDKEVVRWGETVMSANCRCELQTPDCDAVGSTAVVSVITPEKIIVANCGDSRAVLCRNGKAVPLSTDHKPDRPDELDRIQEAGGRVIYWDGARVLGVLAMSRAIGDNYLKPYVTSEPEVTVTDRTEEDEFLILATDGLWDVVTNEAACTMVRMCLNRKSGRGRRRGETQTPGRRSEEEGKEEEEKVVGSRKNGKRGEITDKACTEASVLLTKLALAKHSSDNVSVVVIDLRRRRKRHVA</sequence>
<keyword id="KW-1003">Cell membrane</keyword>
<keyword id="KW-0963">Cytoplasm</keyword>
<keyword id="KW-0341">Growth regulation</keyword>
<keyword id="KW-0378">Hydrolase</keyword>
<keyword id="KW-0460">Magnesium</keyword>
<keyword id="KW-0464">Manganese</keyword>
<keyword id="KW-0472">Membrane</keyword>
<keyword id="KW-0479">Metal-binding</keyword>
<keyword id="KW-0539">Nucleus</keyword>
<keyword id="KW-0904">Protein phosphatase</keyword>
<keyword id="KW-1185">Reference proteome</keyword>
<protein>
    <recommendedName>
        <fullName evidence="9">Protein phosphatase 2C 3</fullName>
        <shortName evidence="9">AtPP2C03</shortName>
        <ecNumber evidence="12">3.1.3.16</ecNumber>
    </recommendedName>
    <alternativeName>
        <fullName evidence="8">Protein AKT1-INTERACTING 1</fullName>
    </alternativeName>
    <alternativeName>
        <fullName evidence="10">Protein HIGHLY ABA-INDUCED PP2C 2</fullName>
    </alternativeName>
    <alternativeName>
        <fullName evidence="11">Protein HONSU</fullName>
    </alternativeName>
    <alternativeName>
        <fullName evidence="8">Protein phosphatase 2C AIP1</fullName>
        <shortName evidence="8">PP2C AIP1</shortName>
    </alternativeName>
</protein>
<feature type="chain" id="PRO_0000344523" description="Protein phosphatase 2C 3">
    <location>
        <begin position="1"/>
        <end position="442"/>
    </location>
</feature>
<feature type="domain" description="PPM-type phosphatase" evidence="2">
    <location>
        <begin position="120"/>
        <end position="433"/>
    </location>
</feature>
<feature type="region of interest" description="Disordered" evidence="3">
    <location>
        <begin position="30"/>
        <end position="100"/>
    </location>
</feature>
<feature type="region of interest" description="Disordered" evidence="3">
    <location>
        <begin position="363"/>
        <end position="401"/>
    </location>
</feature>
<feature type="compositionally biased region" description="Acidic residues" evidence="3">
    <location>
        <begin position="79"/>
        <end position="90"/>
    </location>
</feature>
<feature type="compositionally biased region" description="Basic and acidic residues" evidence="3">
    <location>
        <begin position="376"/>
        <end position="390"/>
    </location>
</feature>
<feature type="binding site" evidence="1">
    <location>
        <position position="162"/>
    </location>
    <ligand>
        <name>Mn(2+)</name>
        <dbReference type="ChEBI" id="CHEBI:29035"/>
        <label>1</label>
    </ligand>
</feature>
<feature type="binding site" evidence="1">
    <location>
        <position position="162"/>
    </location>
    <ligand>
        <name>Mn(2+)</name>
        <dbReference type="ChEBI" id="CHEBI:29035"/>
        <label>2</label>
    </ligand>
</feature>
<feature type="binding site" evidence="1">
    <location>
        <position position="163"/>
    </location>
    <ligand>
        <name>Mn(2+)</name>
        <dbReference type="ChEBI" id="CHEBI:29035"/>
        <label>1</label>
    </ligand>
</feature>
<feature type="binding site" evidence="1">
    <location>
        <position position="339"/>
    </location>
    <ligand>
        <name>Mn(2+)</name>
        <dbReference type="ChEBI" id="CHEBI:29035"/>
        <label>2</label>
    </ligand>
</feature>
<feature type="binding site" evidence="1">
    <location>
        <position position="424"/>
    </location>
    <ligand>
        <name>Mn(2+)</name>
        <dbReference type="ChEBI" id="CHEBI:29035"/>
        <label>2</label>
    </ligand>
</feature>
<feature type="sequence conflict" description="In Ref. 4; AAM61361." evidence="12" ref="4">
    <original>D</original>
    <variation>G</variation>
    <location>
        <position position="253"/>
    </location>
</feature>
<comment type="function">
    <text evidence="4 6 7">Involved in the negative regulation of the K(+) potassium channel AKT1 by its dephosphorylation, antagonistically to CIPK proteins (e.g. CIPK23) (PubMed:17898163). Functions as a positive regulator of abscisic acid-mediated cell signaling during seedling growth (PubMed:22404835). Involved in the regulation of seed dormancy (PubMed:23378449). Acts as a negative regulator of seed dormancy by inhibiting abscisic signaling and subsequently activating gibberellic acid signaling (PubMed:23378449).</text>
</comment>
<comment type="catalytic activity">
    <reaction evidence="12">
        <text>O-phospho-L-seryl-[protein] + H2O = L-seryl-[protein] + phosphate</text>
        <dbReference type="Rhea" id="RHEA:20629"/>
        <dbReference type="Rhea" id="RHEA-COMP:9863"/>
        <dbReference type="Rhea" id="RHEA-COMP:11604"/>
        <dbReference type="ChEBI" id="CHEBI:15377"/>
        <dbReference type="ChEBI" id="CHEBI:29999"/>
        <dbReference type="ChEBI" id="CHEBI:43474"/>
        <dbReference type="ChEBI" id="CHEBI:83421"/>
        <dbReference type="EC" id="3.1.3.16"/>
    </reaction>
    <physiologicalReaction direction="left-to-right" evidence="12">
        <dbReference type="Rhea" id="RHEA:20630"/>
    </physiologicalReaction>
</comment>
<comment type="catalytic activity">
    <reaction evidence="12">
        <text>O-phospho-L-threonyl-[protein] + H2O = L-threonyl-[protein] + phosphate</text>
        <dbReference type="Rhea" id="RHEA:47004"/>
        <dbReference type="Rhea" id="RHEA-COMP:11060"/>
        <dbReference type="Rhea" id="RHEA-COMP:11605"/>
        <dbReference type="ChEBI" id="CHEBI:15377"/>
        <dbReference type="ChEBI" id="CHEBI:30013"/>
        <dbReference type="ChEBI" id="CHEBI:43474"/>
        <dbReference type="ChEBI" id="CHEBI:61977"/>
        <dbReference type="EC" id="3.1.3.16"/>
    </reaction>
    <physiologicalReaction direction="left-to-right" evidence="12">
        <dbReference type="Rhea" id="RHEA:47005"/>
    </physiologicalReaction>
</comment>
<comment type="cofactor">
    <cofactor evidence="2">
        <name>Mg(2+)</name>
        <dbReference type="ChEBI" id="CHEBI:18420"/>
    </cofactor>
    <cofactor evidence="2">
        <name>Mn(2+)</name>
        <dbReference type="ChEBI" id="CHEBI:29035"/>
    </cofactor>
    <text evidence="2">Binds 2 magnesium or manganese ions per subunit.</text>
</comment>
<comment type="subunit">
    <text evidence="4 6 7">Part of a K(+)-channel calcium-sensing kinase/phosphatase complex composed by a calcium sensor CBL (CBL1, CBL2, CBL3 or CBL9), a kinase CIPK (CIPK6, CIPK16 or CIPK23), a phosphatase PP2C (AIP1) and a K(+)-channel (AKT1) (PubMed:17898163). Interacts with AKT1 and CIPK23 (PubMed:17898163). Interacts with PYL8/RCAR3 in an abscisic acid-independent (PubMed:22404835). Interacts with PYR1/RCAR11 in an abscisic acid-dependent manner (PubMed:23378449).</text>
</comment>
<comment type="interaction">
    <interactant intactId="EBI-1573499">
        <id>Q9LNW3</id>
    </interactant>
    <interactant intactId="EBI-15192335">
        <id>C0SUW7</id>
        <label>ARID6</label>
    </interactant>
    <organismsDiffer>false</organismsDiffer>
    <experiments>3</experiments>
</comment>
<comment type="interaction">
    <interactant intactId="EBI-1573499">
        <id>Q9LNW3</id>
    </interactant>
    <interactant intactId="EBI-15191983">
        <id>A0A1I9LTW1</id>
        <label>At3g54390</label>
    </interactant>
    <organismsDiffer>false</organismsDiffer>
    <experiments>3</experiments>
</comment>
<comment type="interaction">
    <interactant intactId="EBI-1573499">
        <id>Q9LNW3</id>
    </interactant>
    <interactant intactId="EBI-2367867">
        <id>Q1PF16</id>
        <label>BHLH19</label>
    </interactant>
    <organismsDiffer>false</organismsDiffer>
    <experiments>3</experiments>
</comment>
<comment type="interaction">
    <interactant intactId="EBI-1573499">
        <id>Q9LNW3</id>
    </interactant>
    <interactant intactId="EBI-25512274">
        <id>A0SVK0</id>
        <label>DOG1</label>
    </interactant>
    <organismsDiffer>false</organismsDiffer>
    <experiments>5</experiments>
</comment>
<comment type="interaction">
    <interactant intactId="EBI-1573499">
        <id>Q9LNW3</id>
    </interactant>
    <interactant intactId="EBI-25506855">
        <id>O23160</id>
        <label>MYB73</label>
    </interactant>
    <organismsDiffer>false</organismsDiffer>
    <experiments>3</experiments>
</comment>
<comment type="interaction">
    <interactant intactId="EBI-1573499">
        <id>Q9LNW3</id>
    </interactant>
    <interactant intactId="EBI-15195677">
        <id>B3H506</id>
        <label>NAC061</label>
    </interactant>
    <organismsDiffer>false</organismsDiffer>
    <experiments>3</experiments>
</comment>
<comment type="interaction">
    <interactant intactId="EBI-1573499">
        <id>Q9LNW3</id>
    </interactant>
    <interactant intactId="EBI-2363213">
        <id>Q8H1R0</id>
        <label>PYL10</label>
    </interactant>
    <organismsDiffer>false</organismsDiffer>
    <experiments>3</experiments>
</comment>
<comment type="interaction">
    <interactant intactId="EBI-1573499">
        <id>Q9LNW3</id>
    </interactant>
    <interactant intactId="EBI-2363233">
        <id>Q9FJ50</id>
        <label>PYL11</label>
    </interactant>
    <organismsDiffer>false</organismsDiffer>
    <experiments>3</experiments>
</comment>
<comment type="interaction">
    <interactant intactId="EBI-1573499">
        <id>Q9LNW3</id>
    </interactant>
    <interactant intactId="EBI-2363244">
        <id>Q9FJ49</id>
        <label>PYL12</label>
    </interactant>
    <organismsDiffer>false</organismsDiffer>
    <experiments>3</experiments>
</comment>
<comment type="interaction">
    <interactant intactId="EBI-1573499">
        <id>Q9LNW3</id>
    </interactant>
    <interactant intactId="EBI-25515027">
        <id>Q9SN51</id>
        <label>PYL13</label>
    </interactant>
    <organismsDiffer>false</organismsDiffer>
    <experiments>7</experiments>
</comment>
<comment type="interaction">
    <interactant intactId="EBI-1573499">
        <id>Q9LNW3</id>
    </interactant>
    <interactant intactId="EBI-2363125">
        <id>O80992</id>
        <label>PYL2</label>
    </interactant>
    <organismsDiffer>false</organismsDiffer>
    <experiments>3</experiments>
</comment>
<comment type="interaction">
    <interactant intactId="EBI-1573499">
        <id>Q9LNW3</id>
    </interactant>
    <interactant intactId="EBI-2363144">
        <id>Q9SSM7</id>
        <label>PYL3</label>
    </interactant>
    <organismsDiffer>false</organismsDiffer>
    <experiments>3</experiments>
</comment>
<comment type="interaction">
    <interactant intactId="EBI-1573499">
        <id>Q9LNW3</id>
    </interactant>
    <interactant intactId="EBI-2349683">
        <id>O80920</id>
        <label>PYL4</label>
    </interactant>
    <organismsDiffer>false</organismsDiffer>
    <experiments>3</experiments>
</comment>
<comment type="interaction">
    <interactant intactId="EBI-1573499">
        <id>Q9LNW3</id>
    </interactant>
    <interactant intactId="EBI-2363181">
        <id>Q9FLB1</id>
        <label>PYL5</label>
    </interactant>
    <organismsDiffer>false</organismsDiffer>
    <experiments>3</experiments>
</comment>
<comment type="interaction">
    <interactant intactId="EBI-1573499">
        <id>Q9LNW3</id>
    </interactant>
    <interactant intactId="EBI-2363192">
        <id>Q8S8E3</id>
        <label>PYL6</label>
    </interactant>
    <organismsDiffer>false</organismsDiffer>
    <experiments>3</experiments>
</comment>
<comment type="interaction">
    <interactant intactId="EBI-1573499">
        <id>Q9LNW3</id>
    </interactant>
    <interactant intactId="EBI-2363203">
        <id>Q1ECF1</id>
        <label>PYL7</label>
    </interactant>
    <organismsDiffer>false</organismsDiffer>
    <experiments>7</experiments>
</comment>
<comment type="interaction">
    <interactant intactId="EBI-1573499">
        <id>Q9LNW3</id>
    </interactant>
    <interactant intactId="EBI-2429535">
        <id>Q9FGM1</id>
        <label>PYL8</label>
    </interactant>
    <organismsDiffer>false</organismsDiffer>
    <experiments>9</experiments>
</comment>
<comment type="interaction">
    <interactant intactId="EBI-1573499">
        <id>Q9LNW3</id>
    </interactant>
    <interactant intactId="EBI-2349513">
        <id>Q84MC7</id>
        <label>PYL9</label>
    </interactant>
    <organismsDiffer>false</organismsDiffer>
    <experiments>9</experiments>
</comment>
<comment type="interaction">
    <interactant intactId="EBI-1573499">
        <id>Q9LNW3</id>
    </interactant>
    <interactant intactId="EBI-2349590">
        <id>O49686</id>
        <label>PYR1</label>
    </interactant>
    <organismsDiffer>false</organismsDiffer>
    <experiments>3</experiments>
</comment>
<comment type="interaction">
    <interactant intactId="EBI-1573499">
        <id>Q9LNW3</id>
    </interactant>
    <interactant intactId="EBI-15192677">
        <id>Q9FMX2</id>
        <label>TCP7</label>
    </interactant>
    <organismsDiffer>false</organismsDiffer>
    <experiments>4</experiments>
</comment>
<comment type="interaction">
    <interactant intactId="EBI-1573499">
        <id>Q9LNW3</id>
    </interactant>
    <interactant intactId="EBI-15206004">
        <id>Q8GY55</id>
        <label>TIFY4B</label>
    </interactant>
    <organismsDiffer>false</organismsDiffer>
    <experiments>3</experiments>
</comment>
<comment type="interaction">
    <interactant intactId="EBI-1573499">
        <id>Q9LNW3</id>
    </interactant>
    <interactant intactId="EBI-15193683">
        <id>Q5CCK4</id>
        <label>VAL2</label>
    </interactant>
    <organismsDiffer>false</organismsDiffer>
    <experiments>3</experiments>
</comment>
<comment type="interaction">
    <interactant intactId="EBI-1573499">
        <id>Q9LNW3</id>
    </interactant>
    <interactant intactId="EBI-2112777">
        <id>Q9SK33</id>
        <label>WRKY60</label>
    </interactant>
    <organismsDiffer>false</organismsDiffer>
    <experiments>3</experiments>
</comment>
<comment type="subcellular location">
    <subcellularLocation>
        <location evidence="13">Cell membrane</location>
    </subcellularLocation>
    <subcellularLocation>
        <location evidence="6">Cytoplasm</location>
    </subcellularLocation>
    <subcellularLocation>
        <location evidence="6">Nucleus</location>
    </subcellularLocation>
    <text evidence="6 13">Probably associated to the plasma membrane when interacting with AKT1 and CIPK23 (Probable). Localizes to nucleus when interacting with PYL8/RCAR3 (PubMed:22404835).</text>
</comment>
<comment type="tissue specificity">
    <text evidence="6 7">Expressed in shoot meristem, vascular tissues of cotyledons, and in primary roots surrounding the root meristem (PubMed:22404835). Highly expressed in seeds (PubMed:23378449).</text>
</comment>
<comment type="induction">
    <text evidence="5">Induced by abscisic acid (ABA).</text>
</comment>
<comment type="disruption phenotype">
    <text evidence="6 7">No visible phenotype under normal growth conditions, but mutant plants exhibit reduced sensitivity to abscisic acid (ABA) and glucose during seed germination and seedling stage (PubMed:22404835). Freshly harvested seeds of mutant plants exhibit increased seed dormancy (PubMed:23378449).</text>
</comment>
<comment type="miscellaneous">
    <text evidence="14">Honsu means abnormal drowsiness in Korean.</text>
</comment>
<comment type="similarity">
    <text evidence="12">Belongs to the PP2C family.</text>
</comment>
<evidence type="ECO:0000250" key="1">
    <source>
        <dbReference type="UniProtKB" id="Q9CAJ0"/>
    </source>
</evidence>
<evidence type="ECO:0000255" key="2">
    <source>
        <dbReference type="PROSITE-ProRule" id="PRU01082"/>
    </source>
</evidence>
<evidence type="ECO:0000256" key="3">
    <source>
        <dbReference type="SAM" id="MobiDB-lite"/>
    </source>
</evidence>
<evidence type="ECO:0000269" key="4">
    <source>
    </source>
</evidence>
<evidence type="ECO:0000269" key="5">
    <source>
    </source>
</evidence>
<evidence type="ECO:0000269" key="6">
    <source>
    </source>
</evidence>
<evidence type="ECO:0000269" key="7">
    <source>
    </source>
</evidence>
<evidence type="ECO:0000303" key="8">
    <source>
    </source>
</evidence>
<evidence type="ECO:0000303" key="9">
    <source>
    </source>
</evidence>
<evidence type="ECO:0000303" key="10">
    <source>
    </source>
</evidence>
<evidence type="ECO:0000303" key="11">
    <source>
    </source>
</evidence>
<evidence type="ECO:0000305" key="12"/>
<evidence type="ECO:0000305" key="13">
    <source>
    </source>
</evidence>
<evidence type="ECO:0000305" key="14">
    <source>
    </source>
</evidence>
<evidence type="ECO:0000312" key="15">
    <source>
        <dbReference type="Araport" id="AT1G07430"/>
    </source>
</evidence>
<evidence type="ECO:0000312" key="16">
    <source>
        <dbReference type="EMBL" id="AAF79555.1"/>
    </source>
</evidence>
<accession>Q9LNW3</accession>
<accession>Q8LFK5</accession>
<gene>
    <name evidence="8" type="primary">AIP1</name>
    <name evidence="10" type="synonym">HAI2</name>
    <name evidence="11" type="synonym">HON</name>
    <name evidence="15" type="ordered locus">At1g07430</name>
    <name evidence="16" type="ORF">F22G5.22</name>
</gene>
<name>P2C03_ARATH</name>